<comment type="function">
    <text>Cardioregulatory neurohormone that increases heart beat rate during adult wing inflation; has no effect on beat amplitude. The effect of CCAP is both ino- and chronotropic.</text>
</comment>
<comment type="subcellular location">
    <subcellularLocation>
        <location evidence="1">Secreted</location>
    </subcellularLocation>
</comment>
<keyword id="KW-0027">Amidation</keyword>
<keyword id="KW-0903">Direct protein sequencing</keyword>
<keyword id="KW-1015">Disulfide bond</keyword>
<keyword id="KW-0372">Hormone</keyword>
<keyword id="KW-0527">Neuropeptide</keyword>
<keyword id="KW-0964">Secreted</keyword>
<reference key="1">
    <citation type="journal article" date="1993" name="Biol. Chem. Hoppe-Seyler">
        <title>Isolation and identification of a cardioactive peptide from Tenebrio molitor and Spodoptera eridania.</title>
        <authorList>
            <person name="Furuya K."/>
            <person name="Liao S."/>
            <person name="Reynolds S.E."/>
            <person name="Ota R.B."/>
            <person name="Hackett M."/>
            <person name="Schooley D.A."/>
        </authorList>
    </citation>
    <scope>PROTEIN SEQUENCE</scope>
    <scope>AMIDATION AT CYS-9</scope>
    <source>
        <tissue>Head</tissue>
    </source>
</reference>
<proteinExistence type="evidence at protein level"/>
<feature type="peptide" id="PRO_0000044117" description="Cardioactive peptide">
    <location>
        <begin position="1"/>
        <end position="9"/>
    </location>
</feature>
<feature type="modified residue" description="Cysteine amide" evidence="2">
    <location>
        <position position="9"/>
    </location>
</feature>
<feature type="disulfide bond">
    <location>
        <begin position="3"/>
        <end position="9"/>
    </location>
</feature>
<protein>
    <recommendedName>
        <fullName>Cardioactive peptide</fullName>
    </recommendedName>
    <alternativeName>
        <fullName>Crustacean cardioactive peptide</fullName>
        <shortName>CCAP</shortName>
    </alternativeName>
</protein>
<accession>P84120</accession>
<accession>P38556</accession>
<evidence type="ECO:0000250" key="1"/>
<evidence type="ECO:0000269" key="2">
    <source>
    </source>
</evidence>
<organism>
    <name type="scientific">Tenebrio molitor</name>
    <name type="common">Yellow mealworm beetle</name>
    <dbReference type="NCBI Taxonomy" id="7067"/>
    <lineage>
        <taxon>Eukaryota</taxon>
        <taxon>Metazoa</taxon>
        <taxon>Ecdysozoa</taxon>
        <taxon>Arthropoda</taxon>
        <taxon>Hexapoda</taxon>
        <taxon>Insecta</taxon>
        <taxon>Pterygota</taxon>
        <taxon>Neoptera</taxon>
        <taxon>Endopterygota</taxon>
        <taxon>Coleoptera</taxon>
        <taxon>Polyphaga</taxon>
        <taxon>Cucujiformia</taxon>
        <taxon>Tenebrionidae</taxon>
        <taxon>Tenebrio</taxon>
    </lineage>
</organism>
<dbReference type="GO" id="GO:0005576">
    <property type="term" value="C:extracellular region"/>
    <property type="evidence" value="ECO:0007669"/>
    <property type="project" value="UniProtKB-SubCell"/>
</dbReference>
<dbReference type="GO" id="GO:0005179">
    <property type="term" value="F:hormone activity"/>
    <property type="evidence" value="ECO:0007669"/>
    <property type="project" value="UniProtKB-KW"/>
</dbReference>
<dbReference type="GO" id="GO:0007218">
    <property type="term" value="P:neuropeptide signaling pathway"/>
    <property type="evidence" value="ECO:0007669"/>
    <property type="project" value="UniProtKB-KW"/>
</dbReference>
<sequence length="9" mass="959">PFCNAFTGC</sequence>
<name>CCAP_TENMO</name>